<dbReference type="EC" id="1.8.1.9"/>
<dbReference type="EMBL" id="BX571856">
    <property type="protein sequence ID" value="CAG39828.1"/>
    <property type="molecule type" value="Genomic_DNA"/>
</dbReference>
<dbReference type="RefSeq" id="WP_000134960.1">
    <property type="nucleotide sequence ID" value="NC_002952.2"/>
</dbReference>
<dbReference type="SMR" id="Q6GIM7"/>
<dbReference type="KEGG" id="sar:SAR0818"/>
<dbReference type="HOGENOM" id="CLU_031864_5_1_9"/>
<dbReference type="Proteomes" id="UP000000596">
    <property type="component" value="Chromosome"/>
</dbReference>
<dbReference type="GO" id="GO:0005737">
    <property type="term" value="C:cytoplasm"/>
    <property type="evidence" value="ECO:0007669"/>
    <property type="project" value="UniProtKB-SubCell"/>
</dbReference>
<dbReference type="GO" id="GO:0004791">
    <property type="term" value="F:thioredoxin-disulfide reductase (NADPH) activity"/>
    <property type="evidence" value="ECO:0007669"/>
    <property type="project" value="UniProtKB-EC"/>
</dbReference>
<dbReference type="GO" id="GO:0019430">
    <property type="term" value="P:removal of superoxide radicals"/>
    <property type="evidence" value="ECO:0007669"/>
    <property type="project" value="InterPro"/>
</dbReference>
<dbReference type="Gene3D" id="3.50.50.60">
    <property type="entry name" value="FAD/NAD(P)-binding domain"/>
    <property type="match status" value="2"/>
</dbReference>
<dbReference type="InterPro" id="IPR036188">
    <property type="entry name" value="FAD/NAD-bd_sf"/>
</dbReference>
<dbReference type="InterPro" id="IPR023753">
    <property type="entry name" value="FAD/NAD-binding_dom"/>
</dbReference>
<dbReference type="InterPro" id="IPR050097">
    <property type="entry name" value="Ferredoxin-NADP_redctase_2"/>
</dbReference>
<dbReference type="InterPro" id="IPR008255">
    <property type="entry name" value="Pyr_nucl-diS_OxRdtase_2_AS"/>
</dbReference>
<dbReference type="InterPro" id="IPR005982">
    <property type="entry name" value="Thioredox_Rdtase"/>
</dbReference>
<dbReference type="NCBIfam" id="TIGR01292">
    <property type="entry name" value="TRX_reduct"/>
    <property type="match status" value="1"/>
</dbReference>
<dbReference type="PANTHER" id="PTHR48105">
    <property type="entry name" value="THIOREDOXIN REDUCTASE 1-RELATED-RELATED"/>
    <property type="match status" value="1"/>
</dbReference>
<dbReference type="Pfam" id="PF07992">
    <property type="entry name" value="Pyr_redox_2"/>
    <property type="match status" value="1"/>
</dbReference>
<dbReference type="PRINTS" id="PR00368">
    <property type="entry name" value="FADPNR"/>
</dbReference>
<dbReference type="PRINTS" id="PR00469">
    <property type="entry name" value="PNDRDTASEII"/>
</dbReference>
<dbReference type="SUPFAM" id="SSF51905">
    <property type="entry name" value="FAD/NAD(P)-binding domain"/>
    <property type="match status" value="1"/>
</dbReference>
<dbReference type="PROSITE" id="PS00573">
    <property type="entry name" value="PYRIDINE_REDOX_2"/>
    <property type="match status" value="1"/>
</dbReference>
<reference key="1">
    <citation type="journal article" date="2004" name="Proc. Natl. Acad. Sci. U.S.A.">
        <title>Complete genomes of two clinical Staphylococcus aureus strains: evidence for the rapid evolution of virulence and drug resistance.</title>
        <authorList>
            <person name="Holden M.T.G."/>
            <person name="Feil E.J."/>
            <person name="Lindsay J.A."/>
            <person name="Peacock S.J."/>
            <person name="Day N.P.J."/>
            <person name="Enright M.C."/>
            <person name="Foster T.J."/>
            <person name="Moore C.E."/>
            <person name="Hurst L."/>
            <person name="Atkin R."/>
            <person name="Barron A."/>
            <person name="Bason N."/>
            <person name="Bentley S.D."/>
            <person name="Chillingworth C."/>
            <person name="Chillingworth T."/>
            <person name="Churcher C."/>
            <person name="Clark L."/>
            <person name="Corton C."/>
            <person name="Cronin A."/>
            <person name="Doggett J."/>
            <person name="Dowd L."/>
            <person name="Feltwell T."/>
            <person name="Hance Z."/>
            <person name="Harris B."/>
            <person name="Hauser H."/>
            <person name="Holroyd S."/>
            <person name="Jagels K."/>
            <person name="James K.D."/>
            <person name="Lennard N."/>
            <person name="Line A."/>
            <person name="Mayes R."/>
            <person name="Moule S."/>
            <person name="Mungall K."/>
            <person name="Ormond D."/>
            <person name="Quail M.A."/>
            <person name="Rabbinowitsch E."/>
            <person name="Rutherford K.M."/>
            <person name="Sanders M."/>
            <person name="Sharp S."/>
            <person name="Simmonds M."/>
            <person name="Stevens K."/>
            <person name="Whitehead S."/>
            <person name="Barrell B.G."/>
            <person name="Spratt B.G."/>
            <person name="Parkhill J."/>
        </authorList>
    </citation>
    <scope>NUCLEOTIDE SEQUENCE [LARGE SCALE GENOMIC DNA]</scope>
    <source>
        <strain>MRSA252</strain>
    </source>
</reference>
<protein>
    <recommendedName>
        <fullName>Thioredoxin reductase</fullName>
        <shortName>TRXR</shortName>
        <ecNumber>1.8.1.9</ecNumber>
    </recommendedName>
</protein>
<proteinExistence type="inferred from homology"/>
<feature type="chain" id="PRO_0000166747" description="Thioredoxin reductase">
    <location>
        <begin position="1"/>
        <end position="311"/>
    </location>
</feature>
<feature type="binding site" evidence="2">
    <location>
        <begin position="35"/>
        <end position="42"/>
    </location>
    <ligand>
        <name>FAD</name>
        <dbReference type="ChEBI" id="CHEBI:57692"/>
    </ligand>
</feature>
<feature type="binding site" evidence="2">
    <location>
        <begin position="277"/>
        <end position="286"/>
    </location>
    <ligand>
        <name>FAD</name>
        <dbReference type="ChEBI" id="CHEBI:57692"/>
    </ligand>
</feature>
<feature type="disulfide bond" description="Redox-active" evidence="2">
    <location>
        <begin position="134"/>
        <end position="137"/>
    </location>
</feature>
<keyword id="KW-0963">Cytoplasm</keyword>
<keyword id="KW-1015">Disulfide bond</keyword>
<keyword id="KW-0274">FAD</keyword>
<keyword id="KW-0285">Flavoprotein</keyword>
<keyword id="KW-0521">NADP</keyword>
<keyword id="KW-0560">Oxidoreductase</keyword>
<keyword id="KW-0676">Redox-active center</keyword>
<evidence type="ECO:0000250" key="1"/>
<evidence type="ECO:0000250" key="2">
    <source>
        <dbReference type="UniProtKB" id="P0A9P4"/>
    </source>
</evidence>
<evidence type="ECO:0000305" key="3"/>
<sequence length="311" mass="33588">MTEIDFDIAIIGAGPAGMTAAVYASRANLKTVMIERGIPGGQMANTEEVENFPGFEMITGPDLSTKMFEHAKKFGAVYQYGDIKSVEDKGEYKVINFGNKELTAKAVIIATGAEYKKIGVPGEQELGGRGVSYCAVCDGAFFKNKRLFVIGGGDSAVEEGTFLTKFADKVTIVHRRDELRAQRILQDRAFKNDKIDFIWSHTLKSINEKDGKVGSVTLTSTKDGSEETHEADGVFIYIGMKPLTAPFKDLGITNDVGYIVTKDDMTTSAPGIFAAGDVRDKGLRQIVTATGDGSIAAQSAAEYIEHLNDQA</sequence>
<organism>
    <name type="scientific">Staphylococcus aureus (strain MRSA252)</name>
    <dbReference type="NCBI Taxonomy" id="282458"/>
    <lineage>
        <taxon>Bacteria</taxon>
        <taxon>Bacillati</taxon>
        <taxon>Bacillota</taxon>
        <taxon>Bacilli</taxon>
        <taxon>Bacillales</taxon>
        <taxon>Staphylococcaceae</taxon>
        <taxon>Staphylococcus</taxon>
    </lineage>
</organism>
<accession>Q6GIM7</accession>
<comment type="catalytic activity">
    <reaction>
        <text>[thioredoxin]-dithiol + NADP(+) = [thioredoxin]-disulfide + NADPH + H(+)</text>
        <dbReference type="Rhea" id="RHEA:20345"/>
        <dbReference type="Rhea" id="RHEA-COMP:10698"/>
        <dbReference type="Rhea" id="RHEA-COMP:10700"/>
        <dbReference type="ChEBI" id="CHEBI:15378"/>
        <dbReference type="ChEBI" id="CHEBI:29950"/>
        <dbReference type="ChEBI" id="CHEBI:50058"/>
        <dbReference type="ChEBI" id="CHEBI:57783"/>
        <dbReference type="ChEBI" id="CHEBI:58349"/>
        <dbReference type="EC" id="1.8.1.9"/>
    </reaction>
</comment>
<comment type="cofactor">
    <cofactor evidence="2">
        <name>FAD</name>
        <dbReference type="ChEBI" id="CHEBI:57692"/>
    </cofactor>
    <text evidence="2">Binds 1 FAD per subunit.</text>
</comment>
<comment type="subunit">
    <text evidence="2">Homodimer.</text>
</comment>
<comment type="subcellular location">
    <subcellularLocation>
        <location evidence="1">Cytoplasm</location>
    </subcellularLocation>
</comment>
<comment type="miscellaneous">
    <text>The active site is a redox-active disulfide bond.</text>
</comment>
<comment type="similarity">
    <text evidence="3">Belongs to the class-II pyridine nucleotide-disulfide oxidoreductase family.</text>
</comment>
<gene>
    <name type="primary">trxB</name>
    <name type="ordered locus">SAR0818</name>
</gene>
<name>TRXB_STAAR</name>